<accession>B0UQ51</accession>
<keyword id="KW-0227">DNA damage</keyword>
<keyword id="KW-0234">DNA repair</keyword>
<keyword id="KW-0235">DNA replication</keyword>
<keyword id="KW-0436">Ligase</keyword>
<keyword id="KW-0460">Magnesium</keyword>
<keyword id="KW-0464">Manganese</keyword>
<keyword id="KW-0479">Metal-binding</keyword>
<keyword id="KW-0520">NAD</keyword>
<keyword id="KW-0862">Zinc</keyword>
<protein>
    <recommendedName>
        <fullName evidence="1">DNA ligase</fullName>
        <ecNumber evidence="1">6.5.1.2</ecNumber>
    </recommendedName>
    <alternativeName>
        <fullName evidence="1">Polydeoxyribonucleotide synthase [NAD(+)]</fullName>
    </alternativeName>
</protein>
<comment type="function">
    <text evidence="1">DNA ligase that catalyzes the formation of phosphodiester linkages between 5'-phosphoryl and 3'-hydroxyl groups in double-stranded DNA using NAD as a coenzyme and as the energy source for the reaction. It is essential for DNA replication and repair of damaged DNA.</text>
</comment>
<comment type="catalytic activity">
    <reaction evidence="1">
        <text>NAD(+) + (deoxyribonucleotide)n-3'-hydroxyl + 5'-phospho-(deoxyribonucleotide)m = (deoxyribonucleotide)n+m + AMP + beta-nicotinamide D-nucleotide.</text>
        <dbReference type="EC" id="6.5.1.2"/>
    </reaction>
</comment>
<comment type="cofactor">
    <cofactor evidence="1">
        <name>Mg(2+)</name>
        <dbReference type="ChEBI" id="CHEBI:18420"/>
    </cofactor>
    <cofactor evidence="1">
        <name>Mn(2+)</name>
        <dbReference type="ChEBI" id="CHEBI:29035"/>
    </cofactor>
</comment>
<comment type="similarity">
    <text evidence="1">Belongs to the NAD-dependent DNA ligase family. LigA subfamily.</text>
</comment>
<feature type="chain" id="PRO_0000380420" description="DNA ligase">
    <location>
        <begin position="1"/>
        <end position="827"/>
    </location>
</feature>
<feature type="domain" description="BRCT" evidence="1">
    <location>
        <begin position="748"/>
        <end position="827"/>
    </location>
</feature>
<feature type="active site" description="N6-AMP-lysine intermediate" evidence="1">
    <location>
        <position position="130"/>
    </location>
</feature>
<feature type="binding site" evidence="1">
    <location>
        <begin position="45"/>
        <end position="49"/>
    </location>
    <ligand>
        <name>NAD(+)</name>
        <dbReference type="ChEBI" id="CHEBI:57540"/>
    </ligand>
</feature>
<feature type="binding site" evidence="1">
    <location>
        <begin position="94"/>
        <end position="95"/>
    </location>
    <ligand>
        <name>NAD(+)</name>
        <dbReference type="ChEBI" id="CHEBI:57540"/>
    </ligand>
</feature>
<feature type="binding site" evidence="1">
    <location>
        <position position="128"/>
    </location>
    <ligand>
        <name>NAD(+)</name>
        <dbReference type="ChEBI" id="CHEBI:57540"/>
    </ligand>
</feature>
<feature type="binding site" evidence="1">
    <location>
        <position position="151"/>
    </location>
    <ligand>
        <name>NAD(+)</name>
        <dbReference type="ChEBI" id="CHEBI:57540"/>
    </ligand>
</feature>
<feature type="binding site" evidence="1">
    <location>
        <position position="188"/>
    </location>
    <ligand>
        <name>NAD(+)</name>
        <dbReference type="ChEBI" id="CHEBI:57540"/>
    </ligand>
</feature>
<feature type="binding site" evidence="1">
    <location>
        <position position="304"/>
    </location>
    <ligand>
        <name>NAD(+)</name>
        <dbReference type="ChEBI" id="CHEBI:57540"/>
    </ligand>
</feature>
<feature type="binding site" evidence="1">
    <location>
        <position position="328"/>
    </location>
    <ligand>
        <name>NAD(+)</name>
        <dbReference type="ChEBI" id="CHEBI:57540"/>
    </ligand>
</feature>
<feature type="binding site" evidence="1">
    <location>
        <position position="451"/>
    </location>
    <ligand>
        <name>Zn(2+)</name>
        <dbReference type="ChEBI" id="CHEBI:29105"/>
    </ligand>
</feature>
<feature type="binding site" evidence="1">
    <location>
        <position position="454"/>
    </location>
    <ligand>
        <name>Zn(2+)</name>
        <dbReference type="ChEBI" id="CHEBI:29105"/>
    </ligand>
</feature>
<feature type="binding site" evidence="1">
    <location>
        <position position="475"/>
    </location>
    <ligand>
        <name>Zn(2+)</name>
        <dbReference type="ChEBI" id="CHEBI:29105"/>
    </ligand>
</feature>
<feature type="binding site" evidence="1">
    <location>
        <position position="481"/>
    </location>
    <ligand>
        <name>Zn(2+)</name>
        <dbReference type="ChEBI" id="CHEBI:29105"/>
    </ligand>
</feature>
<organism>
    <name type="scientific">Methylobacterium sp. (strain 4-46)</name>
    <dbReference type="NCBI Taxonomy" id="426117"/>
    <lineage>
        <taxon>Bacteria</taxon>
        <taxon>Pseudomonadati</taxon>
        <taxon>Pseudomonadota</taxon>
        <taxon>Alphaproteobacteria</taxon>
        <taxon>Hyphomicrobiales</taxon>
        <taxon>Methylobacteriaceae</taxon>
        <taxon>Methylobacterium</taxon>
    </lineage>
</organism>
<reference key="1">
    <citation type="submission" date="2008-02" db="EMBL/GenBank/DDBJ databases">
        <title>Complete sequence of chromosome of Methylobacterium sp. 4-46.</title>
        <authorList>
            <consortium name="US DOE Joint Genome Institute"/>
            <person name="Copeland A."/>
            <person name="Lucas S."/>
            <person name="Lapidus A."/>
            <person name="Glavina del Rio T."/>
            <person name="Dalin E."/>
            <person name="Tice H."/>
            <person name="Bruce D."/>
            <person name="Goodwin L."/>
            <person name="Pitluck S."/>
            <person name="Chertkov O."/>
            <person name="Brettin T."/>
            <person name="Detter J.C."/>
            <person name="Han C."/>
            <person name="Kuske C.R."/>
            <person name="Schmutz J."/>
            <person name="Larimer F."/>
            <person name="Land M."/>
            <person name="Hauser L."/>
            <person name="Kyrpides N."/>
            <person name="Ivanova N."/>
            <person name="Marx C.J."/>
            <person name="Richardson P."/>
        </authorList>
    </citation>
    <scope>NUCLEOTIDE SEQUENCE [LARGE SCALE GENOMIC DNA]</scope>
    <source>
        <strain>4-46</strain>
    </source>
</reference>
<proteinExistence type="inferred from homology"/>
<name>DNLJ_METS4</name>
<sequence>MAAQTTRPVEEITAEEARAAHEALSAEIAEHDRRYHGEDAPIISDAAYDSLRRRLEAIEERFPDLAGTGAASASVGAKASDKFAKVRHAVPMLSLGNAFADEEIEEFVERVRRFLGLPASESLAVTAEPKIDGLSLSLRYEGGRLVTAATRGDGEVGEDVTANVRTIREVPERLAGPDVPEICEVRGEVYLSHADFAAINARQEEAGKPLFANPRNAAAGSLRQLDPSITASRPLRFFAYAAGEMSTWPAETQSGLIAAFRRFGLPVNPRTTRCTSVAEMLAHYRAIETERADLGYDIDGVVYKVDSFALQRRLGFVARAPRWALAHKFPAQRAVTTIEAIEINVGRTGSLNPLARLRPVTVGGVVVSNATLHNEDYVRGIDADGTPIRSGINIWDGFALRTDVDLSRGSDVRVGDTVVVLRAGDVIPKVADVVLERRPADAVPYRFPEICPACGSHAVRSYNPRTGKLDSVRRCTGGLICPAQGQERLKHFVSRNALDIEGFGETSITTLFEAGLVRQPADLFRLDFAPLKAAIVARRQALSAERALASGKAPEARKTKAKASEEDKAIRNLLAAVEARRVVPLNRFIFALGIEQVGEATAKALAKHFPDMPALMEGVRAAAAHQPGPDWVGLAALNRVGPTTRERLLAAAEAGETDLLAEGTVARLSAAQKEALLEAYGSPEGVRAAVMRACRQRPGDAYRHLADDSEIGAVTTASLIQFFSEAHNVAAVEALLAQVRTERAAPPAAAAAFSGRTVVFTGSLERMTRSEAKATAERLGAKVSGSVSAKTDLVVAGPGAGTKLKDAEKHGVRVISEAEWLAMVEAA</sequence>
<gene>
    <name evidence="1" type="primary">ligA</name>
    <name type="ordered locus">M446_1689</name>
</gene>
<evidence type="ECO:0000255" key="1">
    <source>
        <dbReference type="HAMAP-Rule" id="MF_01588"/>
    </source>
</evidence>
<dbReference type="EC" id="6.5.1.2" evidence="1"/>
<dbReference type="EMBL" id="CP000943">
    <property type="protein sequence ID" value="ACA16182.1"/>
    <property type="molecule type" value="Genomic_DNA"/>
</dbReference>
<dbReference type="RefSeq" id="WP_012331593.1">
    <property type="nucleotide sequence ID" value="NC_010511.1"/>
</dbReference>
<dbReference type="SMR" id="B0UQ51"/>
<dbReference type="STRING" id="426117.M446_1689"/>
<dbReference type="KEGG" id="met:M446_1689"/>
<dbReference type="eggNOG" id="COG0272">
    <property type="taxonomic scope" value="Bacteria"/>
</dbReference>
<dbReference type="HOGENOM" id="CLU_007764_2_1_5"/>
<dbReference type="GO" id="GO:0005829">
    <property type="term" value="C:cytosol"/>
    <property type="evidence" value="ECO:0007669"/>
    <property type="project" value="TreeGrafter"/>
</dbReference>
<dbReference type="GO" id="GO:0003677">
    <property type="term" value="F:DNA binding"/>
    <property type="evidence" value="ECO:0007669"/>
    <property type="project" value="InterPro"/>
</dbReference>
<dbReference type="GO" id="GO:0003911">
    <property type="term" value="F:DNA ligase (NAD+) activity"/>
    <property type="evidence" value="ECO:0007669"/>
    <property type="project" value="UniProtKB-UniRule"/>
</dbReference>
<dbReference type="GO" id="GO:0046872">
    <property type="term" value="F:metal ion binding"/>
    <property type="evidence" value="ECO:0007669"/>
    <property type="project" value="UniProtKB-KW"/>
</dbReference>
<dbReference type="GO" id="GO:0006281">
    <property type="term" value="P:DNA repair"/>
    <property type="evidence" value="ECO:0007669"/>
    <property type="project" value="UniProtKB-KW"/>
</dbReference>
<dbReference type="GO" id="GO:0006260">
    <property type="term" value="P:DNA replication"/>
    <property type="evidence" value="ECO:0007669"/>
    <property type="project" value="UniProtKB-KW"/>
</dbReference>
<dbReference type="CDD" id="cd17748">
    <property type="entry name" value="BRCT_DNA_ligase_like"/>
    <property type="match status" value="1"/>
</dbReference>
<dbReference type="CDD" id="cd00114">
    <property type="entry name" value="LIGANc"/>
    <property type="match status" value="1"/>
</dbReference>
<dbReference type="FunFam" id="3.30.470.30:FF:000001">
    <property type="entry name" value="DNA ligase"/>
    <property type="match status" value="1"/>
</dbReference>
<dbReference type="Gene3D" id="6.20.10.30">
    <property type="match status" value="1"/>
</dbReference>
<dbReference type="Gene3D" id="1.10.150.20">
    <property type="entry name" value="5' to 3' exonuclease, C-terminal subdomain"/>
    <property type="match status" value="2"/>
</dbReference>
<dbReference type="Gene3D" id="3.40.50.10190">
    <property type="entry name" value="BRCT domain"/>
    <property type="match status" value="1"/>
</dbReference>
<dbReference type="Gene3D" id="3.30.470.30">
    <property type="entry name" value="DNA ligase/mRNA capping enzyme"/>
    <property type="match status" value="1"/>
</dbReference>
<dbReference type="Gene3D" id="1.10.287.610">
    <property type="entry name" value="Helix hairpin bin"/>
    <property type="match status" value="1"/>
</dbReference>
<dbReference type="Gene3D" id="2.40.50.140">
    <property type="entry name" value="Nucleic acid-binding proteins"/>
    <property type="match status" value="1"/>
</dbReference>
<dbReference type="HAMAP" id="MF_01588">
    <property type="entry name" value="DNA_ligase_A"/>
    <property type="match status" value="1"/>
</dbReference>
<dbReference type="InterPro" id="IPR001357">
    <property type="entry name" value="BRCT_dom"/>
</dbReference>
<dbReference type="InterPro" id="IPR036420">
    <property type="entry name" value="BRCT_dom_sf"/>
</dbReference>
<dbReference type="InterPro" id="IPR041663">
    <property type="entry name" value="DisA/LigA_HHH"/>
</dbReference>
<dbReference type="InterPro" id="IPR001679">
    <property type="entry name" value="DNA_ligase"/>
</dbReference>
<dbReference type="InterPro" id="IPR018239">
    <property type="entry name" value="DNA_ligase_AS"/>
</dbReference>
<dbReference type="InterPro" id="IPR033136">
    <property type="entry name" value="DNA_ligase_CS"/>
</dbReference>
<dbReference type="InterPro" id="IPR013839">
    <property type="entry name" value="DNAligase_adenylation"/>
</dbReference>
<dbReference type="InterPro" id="IPR013840">
    <property type="entry name" value="DNAligase_N"/>
</dbReference>
<dbReference type="InterPro" id="IPR003583">
    <property type="entry name" value="Hlx-hairpin-Hlx_DNA-bd_motif"/>
</dbReference>
<dbReference type="InterPro" id="IPR012340">
    <property type="entry name" value="NA-bd_OB-fold"/>
</dbReference>
<dbReference type="InterPro" id="IPR004150">
    <property type="entry name" value="NAD_DNA_ligase_OB"/>
</dbReference>
<dbReference type="InterPro" id="IPR010994">
    <property type="entry name" value="RuvA_2-like"/>
</dbReference>
<dbReference type="NCBIfam" id="TIGR00575">
    <property type="entry name" value="dnlj"/>
    <property type="match status" value="1"/>
</dbReference>
<dbReference type="NCBIfam" id="NF005932">
    <property type="entry name" value="PRK07956.1"/>
    <property type="match status" value="1"/>
</dbReference>
<dbReference type="PANTHER" id="PTHR23389">
    <property type="entry name" value="CHROMOSOME TRANSMISSION FIDELITY FACTOR 18"/>
    <property type="match status" value="1"/>
</dbReference>
<dbReference type="PANTHER" id="PTHR23389:SF9">
    <property type="entry name" value="DNA LIGASE"/>
    <property type="match status" value="1"/>
</dbReference>
<dbReference type="Pfam" id="PF00533">
    <property type="entry name" value="BRCT"/>
    <property type="match status" value="1"/>
</dbReference>
<dbReference type="Pfam" id="PF01653">
    <property type="entry name" value="DNA_ligase_aden"/>
    <property type="match status" value="1"/>
</dbReference>
<dbReference type="Pfam" id="PF03120">
    <property type="entry name" value="DNA_ligase_OB"/>
    <property type="match status" value="2"/>
</dbReference>
<dbReference type="Pfam" id="PF12826">
    <property type="entry name" value="HHH_2"/>
    <property type="match status" value="1"/>
</dbReference>
<dbReference type="PIRSF" id="PIRSF001604">
    <property type="entry name" value="LigA"/>
    <property type="match status" value="1"/>
</dbReference>
<dbReference type="SMART" id="SM00292">
    <property type="entry name" value="BRCT"/>
    <property type="match status" value="1"/>
</dbReference>
<dbReference type="SMART" id="SM00278">
    <property type="entry name" value="HhH1"/>
    <property type="match status" value="3"/>
</dbReference>
<dbReference type="SMART" id="SM00532">
    <property type="entry name" value="LIGANc"/>
    <property type="match status" value="1"/>
</dbReference>
<dbReference type="SUPFAM" id="SSF52113">
    <property type="entry name" value="BRCT domain"/>
    <property type="match status" value="1"/>
</dbReference>
<dbReference type="SUPFAM" id="SSF56091">
    <property type="entry name" value="DNA ligase/mRNA capping enzyme, catalytic domain"/>
    <property type="match status" value="1"/>
</dbReference>
<dbReference type="SUPFAM" id="SSF50249">
    <property type="entry name" value="Nucleic acid-binding proteins"/>
    <property type="match status" value="2"/>
</dbReference>
<dbReference type="SUPFAM" id="SSF47781">
    <property type="entry name" value="RuvA domain 2-like"/>
    <property type="match status" value="1"/>
</dbReference>
<dbReference type="PROSITE" id="PS50172">
    <property type="entry name" value="BRCT"/>
    <property type="match status" value="1"/>
</dbReference>
<dbReference type="PROSITE" id="PS01055">
    <property type="entry name" value="DNA_LIGASE_N1"/>
    <property type="match status" value="1"/>
</dbReference>
<dbReference type="PROSITE" id="PS01056">
    <property type="entry name" value="DNA_LIGASE_N2"/>
    <property type="match status" value="1"/>
</dbReference>